<proteinExistence type="evidence at protein level"/>
<evidence type="ECO:0000250" key="1"/>
<evidence type="ECO:0000250" key="2">
    <source>
        <dbReference type="UniProtKB" id="O35547"/>
    </source>
</evidence>
<evidence type="ECO:0000250" key="3">
    <source>
        <dbReference type="UniProtKB" id="O60488"/>
    </source>
</evidence>
<evidence type="ECO:0000255" key="4"/>
<evidence type="ECO:0000303" key="5">
    <source>
    </source>
</evidence>
<evidence type="ECO:0000303" key="6">
    <source>
    </source>
</evidence>
<evidence type="ECO:0000305" key="7"/>
<feature type="chain" id="PRO_0000193110" description="Long-chain-fatty-acid--CoA ligase 4">
    <location>
        <begin position="1"/>
        <end position="711"/>
    </location>
</feature>
<feature type="transmembrane region" description="Helical; Signal-anchor for type III membrane protein" evidence="4">
    <location>
        <begin position="8"/>
        <end position="28"/>
    </location>
</feature>
<feature type="topological domain" description="Cytoplasmic" evidence="4">
    <location>
        <begin position="29"/>
        <end position="711"/>
    </location>
</feature>
<feature type="modified residue" description="Phosphoserine" evidence="3">
    <location>
        <position position="447"/>
    </location>
</feature>
<feature type="splice variant" id="VSP_000239" description="In isoform Short." evidence="5 6">
    <location>
        <begin position="1"/>
        <end position="41"/>
    </location>
</feature>
<feature type="sequence conflict" description="In Ref. 1; BAA85929/BAA85930/BAA85931." evidence="7" ref="1">
    <original>V</original>
    <variation>L</variation>
    <location>
        <position position="288"/>
    </location>
</feature>
<feature type="sequence conflict" description="In Ref. 1; BAA85929/BAA85930/BAA85931." evidence="7" ref="1">
    <original>S</original>
    <variation>T</variation>
    <location>
        <position position="293"/>
    </location>
</feature>
<feature type="sequence conflict" description="In Ref. 1; BAA85929/BAA85930/BAA85931." evidence="7" ref="1">
    <original>ALL</original>
    <variation>DLV</variation>
    <location>
        <begin position="430"/>
        <end position="432"/>
    </location>
</feature>
<feature type="sequence conflict" description="In Ref. 1; BAA85929/BAA85930/BAA85931." evidence="7" ref="1">
    <original>S</original>
    <variation>Y</variation>
    <location>
        <position position="441"/>
    </location>
</feature>
<feature type="sequence conflict" description="In Ref. 1; BAA85929/BAA85930/BAA85931." evidence="7" ref="1">
    <original>F</original>
    <variation>L</variation>
    <location>
        <position position="458"/>
    </location>
</feature>
<feature type="sequence conflict" description="In Ref. 1; BAA85929/BAA85930/BAA85931." evidence="7" ref="1">
    <original>S</original>
    <variation>F</variation>
    <location>
        <position position="584"/>
    </location>
</feature>
<feature type="sequence conflict" description="In Ref. 1; BAA85929/BAA85930/BAA85931." evidence="7" ref="1">
    <original>I</original>
    <variation>V</variation>
    <location>
        <position position="704"/>
    </location>
</feature>
<dbReference type="EC" id="6.2.1.3" evidence="2"/>
<dbReference type="EC" id="6.2.1.15" evidence="2"/>
<dbReference type="EMBL" id="AB033887">
    <property type="protein sequence ID" value="BAA85931.1"/>
    <property type="molecule type" value="mRNA"/>
</dbReference>
<dbReference type="EMBL" id="AB033886">
    <property type="protein sequence ID" value="BAA85930.1"/>
    <property type="molecule type" value="mRNA"/>
</dbReference>
<dbReference type="EMBL" id="AB033885">
    <property type="protein sequence ID" value="BAA85929.1"/>
    <property type="molecule type" value="mRNA"/>
</dbReference>
<dbReference type="EMBL" id="AJ243502">
    <property type="protein sequence ID" value="CAB95965.1"/>
    <property type="molecule type" value="mRNA"/>
</dbReference>
<dbReference type="EMBL" id="AL731672">
    <property type="status" value="NOT_ANNOTATED_CDS"/>
    <property type="molecule type" value="Genomic_DNA"/>
</dbReference>
<dbReference type="EMBL" id="BC058663">
    <property type="protein sequence ID" value="AAH58663.1"/>
    <property type="molecule type" value="mRNA"/>
</dbReference>
<dbReference type="CCDS" id="CCDS30448.1">
    <molecule id="Q9QUJ7-1"/>
</dbReference>
<dbReference type="CCDS" id="CCDS41156.1">
    <molecule id="Q9QUJ7-2"/>
</dbReference>
<dbReference type="RefSeq" id="NP_001028772.1">
    <molecule id="Q9QUJ7-2"/>
    <property type="nucleotide sequence ID" value="NM_001033600.1"/>
</dbReference>
<dbReference type="RefSeq" id="NP_062350.3">
    <molecule id="Q9QUJ7-2"/>
    <property type="nucleotide sequence ID" value="NM_019477.3"/>
</dbReference>
<dbReference type="RefSeq" id="NP_997508.1">
    <molecule id="Q9QUJ7-1"/>
    <property type="nucleotide sequence ID" value="NM_207625.2"/>
</dbReference>
<dbReference type="RefSeq" id="XP_011246144.1">
    <molecule id="Q9QUJ7-2"/>
    <property type="nucleotide sequence ID" value="XM_011247842.4"/>
</dbReference>
<dbReference type="RefSeq" id="XP_011246145.1">
    <molecule id="Q9QUJ7-2"/>
    <property type="nucleotide sequence ID" value="XM_011247843.4"/>
</dbReference>
<dbReference type="RefSeq" id="XP_030107239.1">
    <molecule id="Q9QUJ7-1"/>
    <property type="nucleotide sequence ID" value="XM_030251379.2"/>
</dbReference>
<dbReference type="SMR" id="Q9QUJ7"/>
<dbReference type="BioGRID" id="206122">
    <property type="interactions" value="5"/>
</dbReference>
<dbReference type="FunCoup" id="Q9QUJ7">
    <property type="interactions" value="2410"/>
</dbReference>
<dbReference type="IntAct" id="Q9QUJ7">
    <property type="interactions" value="1"/>
</dbReference>
<dbReference type="STRING" id="10090.ENSMUSP00000033634"/>
<dbReference type="GlyGen" id="Q9QUJ7">
    <property type="glycosylation" value="2 sites, 1 N-linked glycan (1 site)"/>
</dbReference>
<dbReference type="iPTMnet" id="Q9QUJ7"/>
<dbReference type="PhosphoSitePlus" id="Q9QUJ7"/>
<dbReference type="SwissPalm" id="Q9QUJ7"/>
<dbReference type="jPOST" id="Q9QUJ7"/>
<dbReference type="PaxDb" id="10090-ENSMUSP00000033634"/>
<dbReference type="ProteomicsDB" id="285658">
    <molecule id="Q9QUJ7-1"/>
</dbReference>
<dbReference type="ProteomicsDB" id="285659">
    <molecule id="Q9QUJ7-2"/>
</dbReference>
<dbReference type="Pumba" id="Q9QUJ7"/>
<dbReference type="Antibodypedia" id="444">
    <property type="antibodies" value="354 antibodies from 36 providers"/>
</dbReference>
<dbReference type="DNASU" id="50790"/>
<dbReference type="Ensembl" id="ENSMUST00000033634.5">
    <molecule id="Q9QUJ7-1"/>
    <property type="protein sequence ID" value="ENSMUSP00000033634.5"/>
    <property type="gene ID" value="ENSMUSG00000031278.13"/>
</dbReference>
<dbReference type="Ensembl" id="ENSMUST00000112903.8">
    <molecule id="Q9QUJ7-2"/>
    <property type="protein sequence ID" value="ENSMUSP00000108524.2"/>
    <property type="gene ID" value="ENSMUSG00000031278.13"/>
</dbReference>
<dbReference type="Ensembl" id="ENSMUST00000112904.8">
    <molecule id="Q9QUJ7-2"/>
    <property type="protein sequence ID" value="ENSMUSP00000108525.2"/>
    <property type="gene ID" value="ENSMUSG00000031278.13"/>
</dbReference>
<dbReference type="Ensembl" id="ENSMUST00000112907.8">
    <molecule id="Q9QUJ7-1"/>
    <property type="protein sequence ID" value="ENSMUSP00000108528.2"/>
    <property type="gene ID" value="ENSMUSG00000031278.13"/>
</dbReference>
<dbReference type="GeneID" id="50790"/>
<dbReference type="KEGG" id="mmu:50790"/>
<dbReference type="UCSC" id="uc009ulu.1">
    <molecule id="Q9QUJ7-1"/>
    <property type="organism name" value="mouse"/>
</dbReference>
<dbReference type="AGR" id="MGI:1354713"/>
<dbReference type="CTD" id="2182"/>
<dbReference type="MGI" id="MGI:1354713">
    <property type="gene designation" value="Acsl4"/>
</dbReference>
<dbReference type="VEuPathDB" id="HostDB:ENSMUSG00000031278"/>
<dbReference type="eggNOG" id="KOG1180">
    <property type="taxonomic scope" value="Eukaryota"/>
</dbReference>
<dbReference type="GeneTree" id="ENSGT00940000157427"/>
<dbReference type="HOGENOM" id="CLU_000022_45_2_1"/>
<dbReference type="InParanoid" id="Q9QUJ7"/>
<dbReference type="OMA" id="RWEPVFH"/>
<dbReference type="OrthoDB" id="1700726at2759"/>
<dbReference type="PhylomeDB" id="Q9QUJ7"/>
<dbReference type="TreeFam" id="TF314012"/>
<dbReference type="BRENDA" id="6.2.1.3">
    <property type="organism ID" value="3474"/>
</dbReference>
<dbReference type="Reactome" id="R-MMU-434313">
    <property type="pathway name" value="Intracellular metabolism of fatty acids regulates insulin secretion"/>
</dbReference>
<dbReference type="Reactome" id="R-MMU-75876">
    <property type="pathway name" value="Synthesis of very long-chain fatty acyl-CoAs"/>
</dbReference>
<dbReference type="BioGRID-ORCS" id="50790">
    <property type="hits" value="13 hits in 81 CRISPR screens"/>
</dbReference>
<dbReference type="ChiTaRS" id="Acsl4">
    <property type="organism name" value="mouse"/>
</dbReference>
<dbReference type="PRO" id="PR:Q9QUJ7"/>
<dbReference type="Proteomes" id="UP000000589">
    <property type="component" value="Chromosome X"/>
</dbReference>
<dbReference type="RNAct" id="Q9QUJ7">
    <property type="molecule type" value="protein"/>
</dbReference>
<dbReference type="Bgee" id="ENSMUSG00000031278">
    <property type="expression patterns" value="Expressed in adrenal gland and 291 other cell types or tissues"/>
</dbReference>
<dbReference type="ExpressionAtlas" id="Q9QUJ7">
    <property type="expression patterns" value="baseline and differential"/>
</dbReference>
<dbReference type="GO" id="GO:0005789">
    <property type="term" value="C:endoplasmic reticulum membrane"/>
    <property type="evidence" value="ECO:0000266"/>
    <property type="project" value="MGI"/>
</dbReference>
<dbReference type="GO" id="GO:0005811">
    <property type="term" value="C:lipid droplet"/>
    <property type="evidence" value="ECO:0007669"/>
    <property type="project" value="Ensembl"/>
</dbReference>
<dbReference type="GO" id="GO:0044233">
    <property type="term" value="C:mitochondria-associated endoplasmic reticulum membrane contact site"/>
    <property type="evidence" value="ECO:0000266"/>
    <property type="project" value="MGI"/>
</dbReference>
<dbReference type="GO" id="GO:0005741">
    <property type="term" value="C:mitochondrial outer membrane"/>
    <property type="evidence" value="ECO:0007669"/>
    <property type="project" value="UniProtKB-SubCell"/>
</dbReference>
<dbReference type="GO" id="GO:0005739">
    <property type="term" value="C:mitochondrion"/>
    <property type="evidence" value="ECO:0000314"/>
    <property type="project" value="MGI"/>
</dbReference>
<dbReference type="GO" id="GO:0005778">
    <property type="term" value="C:peroxisomal membrane"/>
    <property type="evidence" value="ECO:0007669"/>
    <property type="project" value="UniProtKB-SubCell"/>
</dbReference>
<dbReference type="GO" id="GO:0005886">
    <property type="term" value="C:plasma membrane"/>
    <property type="evidence" value="ECO:0007669"/>
    <property type="project" value="UniProtKB-SubCell"/>
</dbReference>
<dbReference type="GO" id="GO:0047676">
    <property type="term" value="F:arachidonate-CoA ligase activity"/>
    <property type="evidence" value="ECO:0000250"/>
    <property type="project" value="UniProtKB"/>
</dbReference>
<dbReference type="GO" id="GO:0005524">
    <property type="term" value="F:ATP binding"/>
    <property type="evidence" value="ECO:0007669"/>
    <property type="project" value="UniProtKB-KW"/>
</dbReference>
<dbReference type="GO" id="GO:0004467">
    <property type="term" value="F:long-chain fatty acid-CoA ligase activity"/>
    <property type="evidence" value="ECO:0000314"/>
    <property type="project" value="MGI"/>
</dbReference>
<dbReference type="GO" id="GO:0031957">
    <property type="term" value="F:very long-chain fatty acid-CoA ligase activity"/>
    <property type="evidence" value="ECO:0007669"/>
    <property type="project" value="Ensembl"/>
</dbReference>
<dbReference type="GO" id="GO:0036109">
    <property type="term" value="P:alpha-linolenic acid metabolic process"/>
    <property type="evidence" value="ECO:0000315"/>
    <property type="project" value="MGI"/>
</dbReference>
<dbReference type="GO" id="GO:0060136">
    <property type="term" value="P:embryonic process involved in female pregnancy"/>
    <property type="evidence" value="ECO:0000315"/>
    <property type="project" value="MGI"/>
</dbReference>
<dbReference type="GO" id="GO:1901570">
    <property type="term" value="P:fatty acid derivative biosynthetic process"/>
    <property type="evidence" value="ECO:0000315"/>
    <property type="project" value="MGI"/>
</dbReference>
<dbReference type="GO" id="GO:0042759">
    <property type="term" value="P:long-chain fatty acid biosynthetic process"/>
    <property type="evidence" value="ECO:0000315"/>
    <property type="project" value="MGI"/>
</dbReference>
<dbReference type="GO" id="GO:0001676">
    <property type="term" value="P:long-chain fatty acid metabolic process"/>
    <property type="evidence" value="ECO:0000250"/>
    <property type="project" value="UniProtKB"/>
</dbReference>
<dbReference type="GO" id="GO:0030182">
    <property type="term" value="P:neuron differentiation"/>
    <property type="evidence" value="ECO:0000315"/>
    <property type="project" value="MGI"/>
</dbReference>
<dbReference type="GO" id="GO:0032024">
    <property type="term" value="P:positive regulation of insulin secretion"/>
    <property type="evidence" value="ECO:0000250"/>
    <property type="project" value="UniProtKB"/>
</dbReference>
<dbReference type="GO" id="GO:0019217">
    <property type="term" value="P:regulation of fatty acid metabolic process"/>
    <property type="evidence" value="ECO:0000304"/>
    <property type="project" value="MGI"/>
</dbReference>
<dbReference type="GO" id="GO:0006636">
    <property type="term" value="P:unsaturated fatty acid biosynthetic process"/>
    <property type="evidence" value="ECO:0000315"/>
    <property type="project" value="MGI"/>
</dbReference>
<dbReference type="CDD" id="cd17639">
    <property type="entry name" value="LC_FACS_euk1"/>
    <property type="match status" value="1"/>
</dbReference>
<dbReference type="Gene3D" id="3.30.300.30">
    <property type="match status" value="1"/>
</dbReference>
<dbReference type="Gene3D" id="3.40.50.12780">
    <property type="entry name" value="N-terminal domain of ligase-like"/>
    <property type="match status" value="1"/>
</dbReference>
<dbReference type="InterPro" id="IPR045851">
    <property type="entry name" value="AMP-bd_C_sf"/>
</dbReference>
<dbReference type="InterPro" id="IPR020845">
    <property type="entry name" value="AMP-binding_CS"/>
</dbReference>
<dbReference type="InterPro" id="IPR000873">
    <property type="entry name" value="AMP-dep_synth/lig_dom"/>
</dbReference>
<dbReference type="InterPro" id="IPR042099">
    <property type="entry name" value="ANL_N_sf"/>
</dbReference>
<dbReference type="PANTHER" id="PTHR43272">
    <property type="entry name" value="LONG-CHAIN-FATTY-ACID--COA LIGASE"/>
    <property type="match status" value="1"/>
</dbReference>
<dbReference type="PANTHER" id="PTHR43272:SF22">
    <property type="entry name" value="LONG-CHAIN-FATTY-ACID--COA LIGASE 4"/>
    <property type="match status" value="1"/>
</dbReference>
<dbReference type="Pfam" id="PF00501">
    <property type="entry name" value="AMP-binding"/>
    <property type="match status" value="1"/>
</dbReference>
<dbReference type="SUPFAM" id="SSF56801">
    <property type="entry name" value="Acetyl-CoA synthetase-like"/>
    <property type="match status" value="1"/>
</dbReference>
<dbReference type="PROSITE" id="PS00455">
    <property type="entry name" value="AMP_BINDING"/>
    <property type="match status" value="1"/>
</dbReference>
<reference key="1">
    <citation type="journal article" date="2000" name="Biochem. Biophys. Res. Commun.">
        <title>Regulation by adrenocorticotropic hormone and arachidonate of the expression of acyl-CoA synthetase 4, an arachidonate-preferring enzyme expressed in steroidogenic tissues.</title>
        <authorList>
            <person name="Cho Y.-Y."/>
            <person name="Kang M.-J."/>
            <person name="Ogawa S."/>
            <person name="Yamashita Y."/>
            <person name="Fujino T."/>
            <person name="Yamamoto T.T."/>
        </authorList>
    </citation>
    <scope>NUCLEOTIDE SEQUENCE [MRNA] (ISOFORMS LONG AND SHORT)</scope>
</reference>
<reference key="2">
    <citation type="journal article" date="2000" name="Cytogenet. Cell Genet.">
        <title>Identification and characterization of mouse orthologs of the AMMECR1 and FACL4 genes deleted in AMME syndrome: orthology of Xq22.3 and MmuXF1-F3.</title>
        <authorList>
            <person name="Vitelli F."/>
            <person name="Meloni I."/>
            <person name="Fineschi S."/>
            <person name="Favara F."/>
            <person name="Tiziana Storlazzi C."/>
            <person name="Rocchi M."/>
            <person name="Renieri A."/>
        </authorList>
    </citation>
    <scope>NUCLEOTIDE SEQUENCE [MRNA] (ISOFORM SHORT)</scope>
    <source>
        <tissue>Embryo</tissue>
    </source>
</reference>
<reference key="3">
    <citation type="journal article" date="2009" name="PLoS Biol.">
        <title>Lineage-specific biology revealed by a finished genome assembly of the mouse.</title>
        <authorList>
            <person name="Church D.M."/>
            <person name="Goodstadt L."/>
            <person name="Hillier L.W."/>
            <person name="Zody M.C."/>
            <person name="Goldstein S."/>
            <person name="She X."/>
            <person name="Bult C.J."/>
            <person name="Agarwala R."/>
            <person name="Cherry J.L."/>
            <person name="DiCuccio M."/>
            <person name="Hlavina W."/>
            <person name="Kapustin Y."/>
            <person name="Meric P."/>
            <person name="Maglott D."/>
            <person name="Birtle Z."/>
            <person name="Marques A.C."/>
            <person name="Graves T."/>
            <person name="Zhou S."/>
            <person name="Teague B."/>
            <person name="Potamousis K."/>
            <person name="Churas C."/>
            <person name="Place M."/>
            <person name="Herschleb J."/>
            <person name="Runnheim R."/>
            <person name="Forrest D."/>
            <person name="Amos-Landgraf J."/>
            <person name="Schwartz D.C."/>
            <person name="Cheng Z."/>
            <person name="Lindblad-Toh K."/>
            <person name="Eichler E.E."/>
            <person name="Ponting C.P."/>
        </authorList>
    </citation>
    <scope>NUCLEOTIDE SEQUENCE [LARGE SCALE GENOMIC DNA]</scope>
    <source>
        <strain>C57BL/6J</strain>
    </source>
</reference>
<reference key="4">
    <citation type="journal article" date="2004" name="Genome Res.">
        <title>The status, quality, and expansion of the NIH full-length cDNA project: the Mammalian Gene Collection (MGC).</title>
        <authorList>
            <consortium name="The MGC Project Team"/>
        </authorList>
    </citation>
    <scope>NUCLEOTIDE SEQUENCE [LARGE SCALE MRNA] (ISOFORM LONG)</scope>
    <source>
        <strain>C57BL/6J</strain>
        <tissue>Brain</tissue>
    </source>
</reference>
<reference key="5">
    <citation type="journal article" date="2010" name="Cell">
        <title>A tissue-specific atlas of mouse protein phosphorylation and expression.</title>
        <authorList>
            <person name="Huttlin E.L."/>
            <person name="Jedrychowski M.P."/>
            <person name="Elias J.E."/>
            <person name="Goswami T."/>
            <person name="Rad R."/>
            <person name="Beausoleil S.A."/>
            <person name="Villen J."/>
            <person name="Haas W."/>
            <person name="Sowa M.E."/>
            <person name="Gygi S.P."/>
        </authorList>
    </citation>
    <scope>IDENTIFICATION BY MASS SPECTROMETRY [LARGE SCALE ANALYSIS]</scope>
    <source>
        <tissue>Brain</tissue>
        <tissue>Brown adipose tissue</tissue>
        <tissue>Kidney</tissue>
        <tissue>Liver</tissue>
        <tissue>Lung</tissue>
        <tissue>Spleen</tissue>
        <tissue>Testis</tissue>
    </source>
</reference>
<protein>
    <recommendedName>
        <fullName>Long-chain-fatty-acid--CoA ligase 4</fullName>
        <ecNumber evidence="2">6.2.1.3</ecNumber>
    </recommendedName>
    <alternativeName>
        <fullName evidence="2">Arachidonate--CoA ligase</fullName>
        <ecNumber evidence="2">6.2.1.15</ecNumber>
    </alternativeName>
    <alternativeName>
        <fullName>Long-chain acyl-CoA synthetase 4</fullName>
        <shortName>LACS 4</shortName>
        <shortName>mACS4</shortName>
    </alternativeName>
</protein>
<gene>
    <name type="primary">Acsl4</name>
    <name type="synonym">Acs4</name>
    <name type="synonym">Facl4</name>
</gene>
<organism>
    <name type="scientific">Mus musculus</name>
    <name type="common">Mouse</name>
    <dbReference type="NCBI Taxonomy" id="10090"/>
    <lineage>
        <taxon>Eukaryota</taxon>
        <taxon>Metazoa</taxon>
        <taxon>Chordata</taxon>
        <taxon>Craniata</taxon>
        <taxon>Vertebrata</taxon>
        <taxon>Euteleostomi</taxon>
        <taxon>Mammalia</taxon>
        <taxon>Eutheria</taxon>
        <taxon>Euarchontoglires</taxon>
        <taxon>Glires</taxon>
        <taxon>Rodentia</taxon>
        <taxon>Myomorpha</taxon>
        <taxon>Muroidea</taxon>
        <taxon>Muridae</taxon>
        <taxon>Murinae</taxon>
        <taxon>Mus</taxon>
        <taxon>Mus</taxon>
    </lineage>
</organism>
<accession>Q9QUJ7</accession>
<accession>Q5D071</accession>
<accession>Q9JHT4</accession>
<accession>Q9R0H3</accession>
<comment type="function">
    <text evidence="2 3">Catalyzes the conversion of long-chain fatty acids to their active form acyl-CoA for both synthesis of cellular lipids, and degradation via beta-oxidation. Preferentially activates arachidonate and eicosapentaenoate as substrates. Preferentially activates 8,9-EET &gt; 14,15-EET &gt; 5,6-EET &gt; 11,12-EET. Modulates glucose-stimulated insulin secretion by regulating the levels of unesterified EETs (By similarity). Modulates prostaglandin E2 secretion (By similarity).</text>
</comment>
<comment type="catalytic activity">
    <reaction evidence="2">
        <text>a long-chain fatty acid + ATP + CoA = a long-chain fatty acyl-CoA + AMP + diphosphate</text>
        <dbReference type="Rhea" id="RHEA:15421"/>
        <dbReference type="ChEBI" id="CHEBI:30616"/>
        <dbReference type="ChEBI" id="CHEBI:33019"/>
        <dbReference type="ChEBI" id="CHEBI:57287"/>
        <dbReference type="ChEBI" id="CHEBI:57560"/>
        <dbReference type="ChEBI" id="CHEBI:83139"/>
        <dbReference type="ChEBI" id="CHEBI:456215"/>
        <dbReference type="EC" id="6.2.1.3"/>
    </reaction>
    <physiologicalReaction direction="left-to-right" evidence="2">
        <dbReference type="Rhea" id="RHEA:15422"/>
    </physiologicalReaction>
</comment>
<comment type="catalytic activity">
    <reaction evidence="2">
        <text>(5Z,8Z,11Z,14Z)-eicosatetraenoate + ATP + CoA = (5Z,8Z,11Z,14Z)-eicosatetraenoyl-CoA + AMP + diphosphate</text>
        <dbReference type="Rhea" id="RHEA:19713"/>
        <dbReference type="ChEBI" id="CHEBI:30616"/>
        <dbReference type="ChEBI" id="CHEBI:32395"/>
        <dbReference type="ChEBI" id="CHEBI:33019"/>
        <dbReference type="ChEBI" id="CHEBI:57287"/>
        <dbReference type="ChEBI" id="CHEBI:57368"/>
        <dbReference type="ChEBI" id="CHEBI:456215"/>
        <dbReference type="EC" id="6.2.1.15"/>
    </reaction>
    <physiologicalReaction direction="left-to-right" evidence="2">
        <dbReference type="Rhea" id="RHEA:19714"/>
    </physiologicalReaction>
</comment>
<comment type="catalytic activity">
    <reaction evidence="2">
        <text>15-hydroxy-(5Z,8Z,11Z,13E)-eicosatetraenoate + ATP + CoA = 15-hydroxy-(5Z,8Z,11Z,13E)-eicosatetraenoyl-CoA + AMP + diphosphate</text>
        <dbReference type="Rhea" id="RHEA:52116"/>
        <dbReference type="ChEBI" id="CHEBI:30616"/>
        <dbReference type="ChEBI" id="CHEBI:33019"/>
        <dbReference type="ChEBI" id="CHEBI:57287"/>
        <dbReference type="ChEBI" id="CHEBI:78832"/>
        <dbReference type="ChEBI" id="CHEBI:136409"/>
        <dbReference type="ChEBI" id="CHEBI:456215"/>
    </reaction>
    <physiologicalReaction direction="left-to-right" evidence="2">
        <dbReference type="Rhea" id="RHEA:52117"/>
    </physiologicalReaction>
</comment>
<comment type="catalytic activity">
    <reaction evidence="2">
        <text>12-hydroxy-(5Z,8Z,10E,14Z)-eicosatetraenoate + ATP + CoA = 12-hydroxy-(5Z,8Z,10E,14Z)-eicosatetraenoyl-CoA + AMP + diphosphate</text>
        <dbReference type="Rhea" id="RHEA:52112"/>
        <dbReference type="ChEBI" id="CHEBI:30616"/>
        <dbReference type="ChEBI" id="CHEBI:33019"/>
        <dbReference type="ChEBI" id="CHEBI:57287"/>
        <dbReference type="ChEBI" id="CHEBI:90718"/>
        <dbReference type="ChEBI" id="CHEBI:136408"/>
        <dbReference type="ChEBI" id="CHEBI:456215"/>
    </reaction>
    <physiologicalReaction direction="left-to-right" evidence="2">
        <dbReference type="Rhea" id="RHEA:52113"/>
    </physiologicalReaction>
</comment>
<comment type="catalytic activity">
    <reaction evidence="2">
        <text>5-hydroxy-(6E,8Z,11Z,14Z)-eicosatetraenoate + ATP + CoA = 5-hydroxy-(6E,8Z,11Z,14Z)-eicosatetraenoyl-CoA + AMP + diphosphate</text>
        <dbReference type="Rhea" id="RHEA:52108"/>
        <dbReference type="ChEBI" id="CHEBI:30616"/>
        <dbReference type="ChEBI" id="CHEBI:33019"/>
        <dbReference type="ChEBI" id="CHEBI:57287"/>
        <dbReference type="ChEBI" id="CHEBI:65341"/>
        <dbReference type="ChEBI" id="CHEBI:136407"/>
        <dbReference type="ChEBI" id="CHEBI:456215"/>
    </reaction>
    <physiologicalReaction direction="left-to-right" evidence="2">
        <dbReference type="Rhea" id="RHEA:52109"/>
    </physiologicalReaction>
</comment>
<comment type="catalytic activity">
    <reaction evidence="2">
        <text>5,6-epoxy-(8Z,11Z,14Z)-eicosatrienoate + ATP + CoA = 5,6-epoxy-(8Z,11Z,14Z)-eicosatrienoyl-CoA + AMP + diphosphate</text>
        <dbReference type="Rhea" id="RHEA:52088"/>
        <dbReference type="ChEBI" id="CHEBI:30616"/>
        <dbReference type="ChEBI" id="CHEBI:33019"/>
        <dbReference type="ChEBI" id="CHEBI:57287"/>
        <dbReference type="ChEBI" id="CHEBI:131992"/>
        <dbReference type="ChEBI" id="CHEBI:136351"/>
        <dbReference type="ChEBI" id="CHEBI:456215"/>
    </reaction>
    <physiologicalReaction direction="left-to-right" evidence="2">
        <dbReference type="Rhea" id="RHEA:52089"/>
    </physiologicalReaction>
</comment>
<comment type="catalytic activity">
    <reaction evidence="2">
        <text>14,15-epoxy-(5Z,8Z,11Z)-eicosatrienoate + ATP + CoA = 14,15-epoxy-(5Z,8Z,11Z)-eicosatrienoyl-CoA + AMP + diphosphate</text>
        <dbReference type="Rhea" id="RHEA:52016"/>
        <dbReference type="ChEBI" id="CHEBI:30616"/>
        <dbReference type="ChEBI" id="CHEBI:33019"/>
        <dbReference type="ChEBI" id="CHEBI:57287"/>
        <dbReference type="ChEBI" id="CHEBI:84024"/>
        <dbReference type="ChEBI" id="CHEBI:136117"/>
        <dbReference type="ChEBI" id="CHEBI:456215"/>
    </reaction>
    <physiologicalReaction direction="left-to-right" evidence="2">
        <dbReference type="Rhea" id="RHEA:52017"/>
    </physiologicalReaction>
</comment>
<comment type="catalytic activity">
    <reaction evidence="2">
        <text>11,12-epoxy-(5Z,8Z,14Z)-eicosatrienoate + ATP + CoA = 11,12-epoxy-(5Z,8Z,14Z)-eicosatrienoyl-CoA + AMP + diphosphate</text>
        <dbReference type="Rhea" id="RHEA:52012"/>
        <dbReference type="ChEBI" id="CHEBI:30616"/>
        <dbReference type="ChEBI" id="CHEBI:33019"/>
        <dbReference type="ChEBI" id="CHEBI:57287"/>
        <dbReference type="ChEBI" id="CHEBI:76625"/>
        <dbReference type="ChEBI" id="CHEBI:136115"/>
        <dbReference type="ChEBI" id="CHEBI:456215"/>
    </reaction>
    <physiologicalReaction direction="left-to-right" evidence="2">
        <dbReference type="Rhea" id="RHEA:52013"/>
    </physiologicalReaction>
</comment>
<comment type="catalytic activity">
    <reaction evidence="2">
        <text>8,9-epoxy-(5Z,11Z,14Z)-eicosatrienoate + ATP + CoA = 8,9-epoxy-(5Z,11Z,14Z)-eicosatrienoyl-CoA + AMP + diphosphate</text>
        <dbReference type="Rhea" id="RHEA:52008"/>
        <dbReference type="ChEBI" id="CHEBI:30616"/>
        <dbReference type="ChEBI" id="CHEBI:33019"/>
        <dbReference type="ChEBI" id="CHEBI:57287"/>
        <dbReference type="ChEBI" id="CHEBI:84025"/>
        <dbReference type="ChEBI" id="CHEBI:136107"/>
        <dbReference type="ChEBI" id="CHEBI:456215"/>
    </reaction>
    <physiologicalReaction direction="left-to-right" evidence="2">
        <dbReference type="Rhea" id="RHEA:52009"/>
    </physiologicalReaction>
</comment>
<comment type="catalytic activity">
    <reaction evidence="3">
        <text>hexadecanoate + ATP + CoA = hexadecanoyl-CoA + AMP + diphosphate</text>
        <dbReference type="Rhea" id="RHEA:30751"/>
        <dbReference type="ChEBI" id="CHEBI:7896"/>
        <dbReference type="ChEBI" id="CHEBI:30616"/>
        <dbReference type="ChEBI" id="CHEBI:33019"/>
        <dbReference type="ChEBI" id="CHEBI:57287"/>
        <dbReference type="ChEBI" id="CHEBI:57379"/>
        <dbReference type="ChEBI" id="CHEBI:456215"/>
    </reaction>
    <physiologicalReaction direction="left-to-right" evidence="3">
        <dbReference type="Rhea" id="RHEA:30752"/>
    </physiologicalReaction>
</comment>
<comment type="catalytic activity">
    <reaction evidence="3">
        <text>(E)-hexadec-2-enoate + ATP + CoA = (2E)-hexadecenoyl-CoA + AMP + diphosphate</text>
        <dbReference type="Rhea" id="RHEA:36139"/>
        <dbReference type="ChEBI" id="CHEBI:30616"/>
        <dbReference type="ChEBI" id="CHEBI:33019"/>
        <dbReference type="ChEBI" id="CHEBI:57287"/>
        <dbReference type="ChEBI" id="CHEBI:61526"/>
        <dbReference type="ChEBI" id="CHEBI:72745"/>
        <dbReference type="ChEBI" id="CHEBI:456215"/>
    </reaction>
    <physiologicalReaction direction="left-to-right" evidence="3">
        <dbReference type="Rhea" id="RHEA:36140"/>
    </physiologicalReaction>
</comment>
<comment type="cofactor">
    <cofactor evidence="1">
        <name>Mg(2+)</name>
        <dbReference type="ChEBI" id="CHEBI:18420"/>
    </cofactor>
</comment>
<comment type="activity regulation">
    <text evidence="3">Both triacsin C and rosiglitazone inhibit arachidonoyl-CoA ligase activity.</text>
</comment>
<comment type="subcellular location">
    <subcellularLocation>
        <location evidence="1">Mitochondrion outer membrane</location>
        <topology evidence="1">Single-pass type III membrane protein</topology>
    </subcellularLocation>
    <subcellularLocation>
        <location evidence="1">Peroxisome membrane</location>
        <topology evidence="1">Single-pass type III membrane protein</topology>
    </subcellularLocation>
    <subcellularLocation>
        <location evidence="1">Microsome membrane</location>
        <topology evidence="1">Single-pass type III membrane protein</topology>
    </subcellularLocation>
    <subcellularLocation>
        <location evidence="3">Endoplasmic reticulum membrane</location>
        <topology evidence="1">Single-pass type III membrane protein</topology>
    </subcellularLocation>
    <subcellularLocation>
        <location evidence="3">Cell membrane</location>
    </subcellularLocation>
</comment>
<comment type="alternative products">
    <event type="alternative splicing"/>
    <isoform>
        <id>Q9QUJ7-1</id>
        <name>Long</name>
        <sequence type="displayed"/>
    </isoform>
    <isoform>
        <id>Q9QUJ7-2</id>
        <name>Short</name>
        <sequence type="described" ref="VSP_000239"/>
    </isoform>
</comment>
<comment type="tissue specificity">
    <text>Abundant in steroidogenic tissues, also found in the kidney, brain and liver.</text>
</comment>
<comment type="induction">
    <text>Induced by adrenocorticotropic hormone (ACTH) and suppressed by glucocorticoid.</text>
</comment>
<comment type="similarity">
    <text evidence="7">Belongs to the ATP-dependent AMP-binding enzyme family.</text>
</comment>
<sequence>MNLKLNVLTIILLPVHLLITIYSALIFIPWYFLTNAKKKNAMAKRIKAKPTSDKPGSPYRSVTHFDSLAVIDIPGADTLDKLFDHAVAKFGKKDSLGTREILSEENEMQPNGKVFKKLILGNYKWINYLEVNCRVNNFGSGLTALGLKPKNTIAIFCETRAEWMIAAQTCFKYNFPLVTLYATLGREAVVHGLNESEASYLITSVELLESKLKAALVDINCVKHIIYVDNKTINRAEYPEGLEIHSMQSVEELGAKPENLSVPPSRPTPSDMAIVMYTSGSTGRPKGVMMHHSNLIAGMTGQCERIPGLGPKDTYIGYLPLAHVLELTAEISCFTYGCRIGYSSPLTLSDQSSKIKKGSKGDCTVLKPTLMAAVPEIMDRIYKNVMSKVQEMNYVQKTLFKIGYDYKLEQIKKGYDAPLCNLILFKKVKALLGGNVRMMLSGGAPLSPQTHRFMNVCFCCPIGQGYGLTESCGAGTVTEVTDYTTGRVGAPLICCEIKLKDWQEGGYTVHDKPNPRGEIVIGGQNISMGYFKNEEKTAEDYCVDENGQRWFCTGDIGEFHPDGCLQIIDRKKDLVKLQAGEYVSLGKVEAALKNCPLIDNICAFAKSDQSYVISFVVPNQKKLTLLAQQKGVEGSWVDICNNPAMEAEILKEIREAANAMKLERFEIPIKVRLSPEPWTPETGLVTDAFKLKRKELKNHYLKDIERMYGGK</sequence>
<keyword id="KW-0025">Alternative splicing</keyword>
<keyword id="KW-0067">ATP-binding</keyword>
<keyword id="KW-1003">Cell membrane</keyword>
<keyword id="KW-0256">Endoplasmic reticulum</keyword>
<keyword id="KW-0276">Fatty acid metabolism</keyword>
<keyword id="KW-0436">Ligase</keyword>
<keyword id="KW-0443">Lipid metabolism</keyword>
<keyword id="KW-0460">Magnesium</keyword>
<keyword id="KW-0472">Membrane</keyword>
<keyword id="KW-0492">Microsome</keyword>
<keyword id="KW-0496">Mitochondrion</keyword>
<keyword id="KW-1000">Mitochondrion outer membrane</keyword>
<keyword id="KW-0547">Nucleotide-binding</keyword>
<keyword id="KW-0576">Peroxisome</keyword>
<keyword id="KW-0597">Phosphoprotein</keyword>
<keyword id="KW-1185">Reference proteome</keyword>
<keyword id="KW-0735">Signal-anchor</keyword>
<keyword id="KW-0812">Transmembrane</keyword>
<keyword id="KW-1133">Transmembrane helix</keyword>
<name>ACSL4_MOUSE</name>